<gene>
    <name evidence="1" type="primary">nadK</name>
    <name type="ordered locus">Ta0622</name>
</gene>
<keyword id="KW-0067">ATP-binding</keyword>
<keyword id="KW-0963">Cytoplasm</keyword>
<keyword id="KW-0418">Kinase</keyword>
<keyword id="KW-0520">NAD</keyword>
<keyword id="KW-0521">NADP</keyword>
<keyword id="KW-0547">Nucleotide-binding</keyword>
<keyword id="KW-1185">Reference proteome</keyword>
<keyword id="KW-0808">Transferase</keyword>
<comment type="function">
    <text evidence="1">Involved in the regulation of the intracellular balance of NAD and NADP, and is a key enzyme in the biosynthesis of NADP. Catalyzes specifically the phosphorylation on 2'-hydroxyl of the adenosine moiety of NAD to yield NADP.</text>
</comment>
<comment type="catalytic activity">
    <reaction evidence="1">
        <text>NAD(+) + ATP = ADP + NADP(+) + H(+)</text>
        <dbReference type="Rhea" id="RHEA:18629"/>
        <dbReference type="ChEBI" id="CHEBI:15378"/>
        <dbReference type="ChEBI" id="CHEBI:30616"/>
        <dbReference type="ChEBI" id="CHEBI:57540"/>
        <dbReference type="ChEBI" id="CHEBI:58349"/>
        <dbReference type="ChEBI" id="CHEBI:456216"/>
        <dbReference type="EC" id="2.7.1.23"/>
    </reaction>
</comment>
<comment type="cofactor">
    <cofactor evidence="1">
        <name>a divalent metal cation</name>
        <dbReference type="ChEBI" id="CHEBI:60240"/>
    </cofactor>
</comment>
<comment type="subcellular location">
    <subcellularLocation>
        <location evidence="1">Cytoplasm</location>
    </subcellularLocation>
</comment>
<comment type="similarity">
    <text evidence="1">Belongs to the NAD kinase family.</text>
</comment>
<organism>
    <name type="scientific">Thermoplasma acidophilum (strain ATCC 25905 / DSM 1728 / JCM 9062 / NBRC 15155 / AMRC-C165)</name>
    <dbReference type="NCBI Taxonomy" id="273075"/>
    <lineage>
        <taxon>Archaea</taxon>
        <taxon>Methanobacteriati</taxon>
        <taxon>Thermoplasmatota</taxon>
        <taxon>Thermoplasmata</taxon>
        <taxon>Thermoplasmatales</taxon>
        <taxon>Thermoplasmataceae</taxon>
        <taxon>Thermoplasma</taxon>
    </lineage>
</organism>
<reference key="1">
    <citation type="journal article" date="2000" name="Nature">
        <title>The genome sequence of the thermoacidophilic scavenger Thermoplasma acidophilum.</title>
        <authorList>
            <person name="Ruepp A."/>
            <person name="Graml W."/>
            <person name="Santos-Martinez M.-L."/>
            <person name="Koretke K.K."/>
            <person name="Volker C."/>
            <person name="Mewes H.-W."/>
            <person name="Frishman D."/>
            <person name="Stocker S."/>
            <person name="Lupas A.N."/>
            <person name="Baumeister W."/>
        </authorList>
    </citation>
    <scope>NUCLEOTIDE SEQUENCE [LARGE SCALE GENOMIC DNA]</scope>
    <source>
        <strain>ATCC 25905 / DSM 1728 / JCM 9062 / NBRC 15155 / AMRC-C165</strain>
    </source>
</reference>
<proteinExistence type="inferred from homology"/>
<name>NADK_THEAC</name>
<accession>Q9HKH7</accession>
<feature type="chain" id="PRO_0000120711" description="NAD kinase">
    <location>
        <begin position="1"/>
        <end position="272"/>
    </location>
</feature>
<feature type="active site" description="Proton acceptor" evidence="1">
    <location>
        <position position="62"/>
    </location>
</feature>
<feature type="binding site" evidence="1">
    <location>
        <begin position="62"/>
        <end position="63"/>
    </location>
    <ligand>
        <name>NAD(+)</name>
        <dbReference type="ChEBI" id="CHEBI:57540"/>
    </ligand>
</feature>
<feature type="binding site" evidence="1">
    <location>
        <position position="67"/>
    </location>
    <ligand>
        <name>NAD(+)</name>
        <dbReference type="ChEBI" id="CHEBI:57540"/>
    </ligand>
</feature>
<feature type="binding site" evidence="1">
    <location>
        <begin position="129"/>
        <end position="130"/>
    </location>
    <ligand>
        <name>NAD(+)</name>
        <dbReference type="ChEBI" id="CHEBI:57540"/>
    </ligand>
</feature>
<feature type="binding site" evidence="1">
    <location>
        <position position="140"/>
    </location>
    <ligand>
        <name>NAD(+)</name>
        <dbReference type="ChEBI" id="CHEBI:57540"/>
    </ligand>
</feature>
<feature type="binding site" evidence="1">
    <location>
        <position position="157"/>
    </location>
    <ligand>
        <name>NAD(+)</name>
        <dbReference type="ChEBI" id="CHEBI:57540"/>
    </ligand>
</feature>
<feature type="binding site" evidence="1">
    <location>
        <position position="159"/>
    </location>
    <ligand>
        <name>NAD(+)</name>
        <dbReference type="ChEBI" id="CHEBI:57540"/>
    </ligand>
</feature>
<feature type="binding site" evidence="1">
    <location>
        <position position="167"/>
    </location>
    <ligand>
        <name>NAD(+)</name>
        <dbReference type="ChEBI" id="CHEBI:57540"/>
    </ligand>
</feature>
<feature type="binding site" evidence="1">
    <location>
        <begin position="170"/>
        <end position="175"/>
    </location>
    <ligand>
        <name>NAD(+)</name>
        <dbReference type="ChEBI" id="CHEBI:57540"/>
    </ligand>
</feature>
<feature type="binding site" evidence="1">
    <location>
        <position position="194"/>
    </location>
    <ligand>
        <name>NAD(+)</name>
        <dbReference type="ChEBI" id="CHEBI:57540"/>
    </ligand>
</feature>
<feature type="binding site" evidence="1">
    <location>
        <position position="229"/>
    </location>
    <ligand>
        <name>NAD(+)</name>
        <dbReference type="ChEBI" id="CHEBI:57540"/>
    </ligand>
</feature>
<evidence type="ECO:0000255" key="1">
    <source>
        <dbReference type="HAMAP-Rule" id="MF_00361"/>
    </source>
</evidence>
<sequence length="272" mass="30088">MKIAFVIRKDCSRCARIAESIIDLLPKDWEIIYDHEAAKFLNSKGLDISQISADVIITIGGDGTVLRTLQMAKGPVLGINMGGLGFLTELEVDEVGSAIFKLIKGQYRITESMKLKVEINGDRVEDCTNEAVVHTERIARIRQFKIYIDGHFLSTMKSDGIIVATPIGSSSYSSSAGGPLLLPTLKGMVISYLAPYSSRLKPVVVTSDSTVEIKIAGRDQECILILDGQREYTVRSGDTVRISRSENSARFLSFRESVYDRIRDKVIKHVVN</sequence>
<protein>
    <recommendedName>
        <fullName evidence="1">NAD kinase</fullName>
        <ecNumber evidence="1">2.7.1.23</ecNumber>
    </recommendedName>
    <alternativeName>
        <fullName evidence="1">ATP-dependent NAD kinase</fullName>
    </alternativeName>
</protein>
<dbReference type="EC" id="2.7.1.23" evidence="1"/>
<dbReference type="EMBL" id="AL445064">
    <property type="protein sequence ID" value="CAC11761.1"/>
    <property type="molecule type" value="Genomic_DNA"/>
</dbReference>
<dbReference type="RefSeq" id="WP_010901045.1">
    <property type="nucleotide sequence ID" value="NC_002578.1"/>
</dbReference>
<dbReference type="SMR" id="Q9HKH7"/>
<dbReference type="FunCoup" id="Q9HKH7">
    <property type="interactions" value="96"/>
</dbReference>
<dbReference type="STRING" id="273075.gene:9571841"/>
<dbReference type="PaxDb" id="273075-Ta0622"/>
<dbReference type="EnsemblBacteria" id="CAC11761">
    <property type="protein sequence ID" value="CAC11761"/>
    <property type="gene ID" value="CAC11761"/>
</dbReference>
<dbReference type="KEGG" id="tac:Ta0622"/>
<dbReference type="eggNOG" id="arCOG01348">
    <property type="taxonomic scope" value="Archaea"/>
</dbReference>
<dbReference type="HOGENOM" id="CLU_008831_0_1_2"/>
<dbReference type="InParanoid" id="Q9HKH7"/>
<dbReference type="OrthoDB" id="77798at2157"/>
<dbReference type="Proteomes" id="UP000001024">
    <property type="component" value="Chromosome"/>
</dbReference>
<dbReference type="GO" id="GO:0005737">
    <property type="term" value="C:cytoplasm"/>
    <property type="evidence" value="ECO:0007669"/>
    <property type="project" value="UniProtKB-SubCell"/>
</dbReference>
<dbReference type="GO" id="GO:0005524">
    <property type="term" value="F:ATP binding"/>
    <property type="evidence" value="ECO:0007669"/>
    <property type="project" value="UniProtKB-KW"/>
</dbReference>
<dbReference type="GO" id="GO:0046872">
    <property type="term" value="F:metal ion binding"/>
    <property type="evidence" value="ECO:0007669"/>
    <property type="project" value="UniProtKB-UniRule"/>
</dbReference>
<dbReference type="GO" id="GO:0003951">
    <property type="term" value="F:NAD+ kinase activity"/>
    <property type="evidence" value="ECO:0007669"/>
    <property type="project" value="UniProtKB-UniRule"/>
</dbReference>
<dbReference type="GO" id="GO:0019674">
    <property type="term" value="P:NAD metabolic process"/>
    <property type="evidence" value="ECO:0007669"/>
    <property type="project" value="InterPro"/>
</dbReference>
<dbReference type="GO" id="GO:0006741">
    <property type="term" value="P:NADP biosynthetic process"/>
    <property type="evidence" value="ECO:0007669"/>
    <property type="project" value="UniProtKB-UniRule"/>
</dbReference>
<dbReference type="Gene3D" id="3.40.50.10330">
    <property type="entry name" value="Probable inorganic polyphosphate/atp-NAD kinase, domain 1"/>
    <property type="match status" value="1"/>
</dbReference>
<dbReference type="Gene3D" id="2.60.200.30">
    <property type="entry name" value="Probable inorganic polyphosphate/atp-NAD kinase, domain 2"/>
    <property type="match status" value="1"/>
</dbReference>
<dbReference type="HAMAP" id="MF_00361">
    <property type="entry name" value="NAD_kinase"/>
    <property type="match status" value="1"/>
</dbReference>
<dbReference type="InterPro" id="IPR017438">
    <property type="entry name" value="ATP-NAD_kinase_N"/>
</dbReference>
<dbReference type="InterPro" id="IPR017437">
    <property type="entry name" value="ATP-NAD_kinase_PpnK-typ_C"/>
</dbReference>
<dbReference type="InterPro" id="IPR016064">
    <property type="entry name" value="NAD/diacylglycerol_kinase_sf"/>
</dbReference>
<dbReference type="InterPro" id="IPR002504">
    <property type="entry name" value="NADK"/>
</dbReference>
<dbReference type="NCBIfam" id="NF002255">
    <property type="entry name" value="PRK01185.1"/>
    <property type="match status" value="1"/>
</dbReference>
<dbReference type="PANTHER" id="PTHR20275">
    <property type="entry name" value="NAD KINASE"/>
    <property type="match status" value="1"/>
</dbReference>
<dbReference type="PANTHER" id="PTHR20275:SF0">
    <property type="entry name" value="NAD KINASE"/>
    <property type="match status" value="1"/>
</dbReference>
<dbReference type="Pfam" id="PF01513">
    <property type="entry name" value="NAD_kinase"/>
    <property type="match status" value="1"/>
</dbReference>
<dbReference type="Pfam" id="PF20143">
    <property type="entry name" value="NAD_kinase_C"/>
    <property type="match status" value="1"/>
</dbReference>
<dbReference type="SUPFAM" id="SSF111331">
    <property type="entry name" value="NAD kinase/diacylglycerol kinase-like"/>
    <property type="match status" value="1"/>
</dbReference>